<name>RLME_BDEBA</name>
<feature type="chain" id="PRO_0000155469" description="Ribosomal RNA large subunit methyltransferase E">
    <location>
        <begin position="1"/>
        <end position="196"/>
    </location>
</feature>
<feature type="active site" description="Proton acceptor" evidence="1">
    <location>
        <position position="152"/>
    </location>
</feature>
<feature type="binding site" evidence="1">
    <location>
        <position position="50"/>
    </location>
    <ligand>
        <name>S-adenosyl-L-methionine</name>
        <dbReference type="ChEBI" id="CHEBI:59789"/>
    </ligand>
</feature>
<feature type="binding site" evidence="1">
    <location>
        <position position="52"/>
    </location>
    <ligand>
        <name>S-adenosyl-L-methionine</name>
        <dbReference type="ChEBI" id="CHEBI:59789"/>
    </ligand>
</feature>
<feature type="binding site" evidence="1">
    <location>
        <position position="70"/>
    </location>
    <ligand>
        <name>S-adenosyl-L-methionine</name>
        <dbReference type="ChEBI" id="CHEBI:59789"/>
    </ligand>
</feature>
<feature type="binding site" evidence="1">
    <location>
        <position position="87"/>
    </location>
    <ligand>
        <name>S-adenosyl-L-methionine</name>
        <dbReference type="ChEBI" id="CHEBI:59789"/>
    </ligand>
</feature>
<feature type="binding site" evidence="1">
    <location>
        <position position="112"/>
    </location>
    <ligand>
        <name>S-adenosyl-L-methionine</name>
        <dbReference type="ChEBI" id="CHEBI:59789"/>
    </ligand>
</feature>
<comment type="function">
    <text evidence="1">Specifically methylates the uridine in position 2552 of 23S rRNA at the 2'-O position of the ribose in the fully assembled 50S ribosomal subunit.</text>
</comment>
<comment type="catalytic activity">
    <reaction evidence="1">
        <text>uridine(2552) in 23S rRNA + S-adenosyl-L-methionine = 2'-O-methyluridine(2552) in 23S rRNA + S-adenosyl-L-homocysteine + H(+)</text>
        <dbReference type="Rhea" id="RHEA:42720"/>
        <dbReference type="Rhea" id="RHEA-COMP:10202"/>
        <dbReference type="Rhea" id="RHEA-COMP:10203"/>
        <dbReference type="ChEBI" id="CHEBI:15378"/>
        <dbReference type="ChEBI" id="CHEBI:57856"/>
        <dbReference type="ChEBI" id="CHEBI:59789"/>
        <dbReference type="ChEBI" id="CHEBI:65315"/>
        <dbReference type="ChEBI" id="CHEBI:74478"/>
        <dbReference type="EC" id="2.1.1.166"/>
    </reaction>
</comment>
<comment type="subcellular location">
    <subcellularLocation>
        <location evidence="1">Cytoplasm</location>
    </subcellularLocation>
</comment>
<comment type="similarity">
    <text evidence="1">Belongs to the class I-like SAM-binding methyltransferase superfamily. RNA methyltransferase RlmE family.</text>
</comment>
<reference key="1">
    <citation type="journal article" date="2004" name="Science">
        <title>A predator unmasked: life cycle of Bdellovibrio bacteriovorus from a genomic perspective.</title>
        <authorList>
            <person name="Rendulic S."/>
            <person name="Jagtap P."/>
            <person name="Rosinus A."/>
            <person name="Eppinger M."/>
            <person name="Baar C."/>
            <person name="Lanz C."/>
            <person name="Keller H."/>
            <person name="Lambert C."/>
            <person name="Evans K.J."/>
            <person name="Goesmann A."/>
            <person name="Meyer F."/>
            <person name="Sockett R.E."/>
            <person name="Schuster S.C."/>
        </authorList>
    </citation>
    <scope>NUCLEOTIDE SEQUENCE [LARGE SCALE GENOMIC DNA]</scope>
    <source>
        <strain>ATCC 15356 / DSM 50701 / NCIMB 9529 / HD100</strain>
    </source>
</reference>
<protein>
    <recommendedName>
        <fullName evidence="1">Ribosomal RNA large subunit methyltransferase E</fullName>
        <ecNumber evidence="1">2.1.1.166</ecNumber>
    </recommendedName>
    <alternativeName>
        <fullName evidence="1">23S rRNA Um2552 methyltransferase</fullName>
    </alternativeName>
    <alternativeName>
        <fullName evidence="1">rRNA (uridine-2'-O-)-methyltransferase</fullName>
    </alternativeName>
</protein>
<gene>
    <name evidence="1" type="primary">rlmE</name>
    <name evidence="1" type="synonym">ftsJ</name>
    <name evidence="1" type="synonym">rrmJ</name>
    <name type="ordered locus">Bd1423</name>
</gene>
<sequence length="196" mass="22342">MTYNPRDHYFRKAKQENFAARSVFKLEEIDQKFKMFKPGQVVLDLGASPGSWSQYASKMAGEKGRVLGVDLSPVTVKLKNAVFIQADLRDLNLEDIFKEHGFVPPFDIVMSDMAPKTTGIRMTDQARSMELCELALDVARRFLKKDGHFVCKLFHSDDFGKLRDEMKKTFAKVEAVKPDSTRKISKEIFLVGLSKK</sequence>
<accession>Q6MN40</accession>
<organism>
    <name type="scientific">Bdellovibrio bacteriovorus (strain ATCC 15356 / DSM 50701 / NCIMB 9529 / HD100)</name>
    <dbReference type="NCBI Taxonomy" id="264462"/>
    <lineage>
        <taxon>Bacteria</taxon>
        <taxon>Pseudomonadati</taxon>
        <taxon>Bdellovibrionota</taxon>
        <taxon>Bdellovibrionia</taxon>
        <taxon>Bdellovibrionales</taxon>
        <taxon>Pseudobdellovibrionaceae</taxon>
        <taxon>Bdellovibrio</taxon>
    </lineage>
</organism>
<evidence type="ECO:0000255" key="1">
    <source>
        <dbReference type="HAMAP-Rule" id="MF_01547"/>
    </source>
</evidence>
<dbReference type="EC" id="2.1.1.166" evidence="1"/>
<dbReference type="EMBL" id="BX842649">
    <property type="protein sequence ID" value="CAE79312.1"/>
    <property type="molecule type" value="Genomic_DNA"/>
</dbReference>
<dbReference type="RefSeq" id="WP_011163914.1">
    <property type="nucleotide sequence ID" value="NC_005363.1"/>
</dbReference>
<dbReference type="SMR" id="Q6MN40"/>
<dbReference type="STRING" id="264462.Bd1423"/>
<dbReference type="GeneID" id="93012434"/>
<dbReference type="KEGG" id="bba:Bd1423"/>
<dbReference type="eggNOG" id="COG0293">
    <property type="taxonomic scope" value="Bacteria"/>
</dbReference>
<dbReference type="HOGENOM" id="CLU_009422_4_0_7"/>
<dbReference type="Proteomes" id="UP000008080">
    <property type="component" value="Chromosome"/>
</dbReference>
<dbReference type="GO" id="GO:0005737">
    <property type="term" value="C:cytoplasm"/>
    <property type="evidence" value="ECO:0007669"/>
    <property type="project" value="UniProtKB-SubCell"/>
</dbReference>
<dbReference type="GO" id="GO:0008650">
    <property type="term" value="F:rRNA (uridine-2'-O-)-methyltransferase activity"/>
    <property type="evidence" value="ECO:0007669"/>
    <property type="project" value="UniProtKB-UniRule"/>
</dbReference>
<dbReference type="CDD" id="cd02440">
    <property type="entry name" value="AdoMet_MTases"/>
    <property type="match status" value="1"/>
</dbReference>
<dbReference type="Gene3D" id="3.40.50.150">
    <property type="entry name" value="Vaccinia Virus protein VP39"/>
    <property type="match status" value="1"/>
</dbReference>
<dbReference type="HAMAP" id="MF_01547">
    <property type="entry name" value="RNA_methyltr_E"/>
    <property type="match status" value="1"/>
</dbReference>
<dbReference type="InterPro" id="IPR050082">
    <property type="entry name" value="RNA_methyltr_RlmE"/>
</dbReference>
<dbReference type="InterPro" id="IPR002877">
    <property type="entry name" value="RNA_MeTrfase_FtsJ_dom"/>
</dbReference>
<dbReference type="InterPro" id="IPR015507">
    <property type="entry name" value="rRNA-MeTfrase_E"/>
</dbReference>
<dbReference type="InterPro" id="IPR029063">
    <property type="entry name" value="SAM-dependent_MTases_sf"/>
</dbReference>
<dbReference type="PANTHER" id="PTHR10920">
    <property type="entry name" value="RIBOSOMAL RNA METHYLTRANSFERASE"/>
    <property type="match status" value="1"/>
</dbReference>
<dbReference type="PANTHER" id="PTHR10920:SF18">
    <property type="entry name" value="RRNA METHYLTRANSFERASE 2, MITOCHONDRIAL"/>
    <property type="match status" value="1"/>
</dbReference>
<dbReference type="Pfam" id="PF01728">
    <property type="entry name" value="FtsJ"/>
    <property type="match status" value="1"/>
</dbReference>
<dbReference type="PIRSF" id="PIRSF005461">
    <property type="entry name" value="23S_rRNA_mtase"/>
    <property type="match status" value="1"/>
</dbReference>
<dbReference type="SUPFAM" id="SSF53335">
    <property type="entry name" value="S-adenosyl-L-methionine-dependent methyltransferases"/>
    <property type="match status" value="1"/>
</dbReference>
<proteinExistence type="inferred from homology"/>
<keyword id="KW-0963">Cytoplasm</keyword>
<keyword id="KW-0489">Methyltransferase</keyword>
<keyword id="KW-1185">Reference proteome</keyword>
<keyword id="KW-0698">rRNA processing</keyword>
<keyword id="KW-0949">S-adenosyl-L-methionine</keyword>
<keyword id="KW-0808">Transferase</keyword>